<keyword id="KW-0025">Alternative splicing</keyword>
<keyword id="KW-1003">Cell membrane</keyword>
<keyword id="KW-0903">Direct protein sequencing</keyword>
<keyword id="KW-1015">Disulfide bond</keyword>
<keyword id="KW-0325">Glycoprotein</keyword>
<keyword id="KW-0326">Glycosidase</keyword>
<keyword id="KW-0336">GPI-anchor</keyword>
<keyword id="KW-0378">Hydrolase</keyword>
<keyword id="KW-0449">Lipoprotein</keyword>
<keyword id="KW-0472">Membrane</keyword>
<keyword id="KW-1267">Proteomics identification</keyword>
<keyword id="KW-1185">Reference proteome</keyword>
<keyword id="KW-0732">Signal</keyword>
<feature type="signal peptide" evidence="3">
    <location>
        <begin position="1"/>
        <end position="23"/>
    </location>
</feature>
<feature type="chain" id="PRO_0000012051" description="Trehalase">
    <location>
        <begin position="24"/>
        <end position="556"/>
    </location>
</feature>
<feature type="propeptide" id="PRO_0000012052" description="Removed in mature form" evidence="3">
    <location>
        <begin position="557"/>
        <end position="583"/>
    </location>
</feature>
<feature type="active site" description="Proton donor/acceptor" evidence="1">
    <location>
        <position position="321"/>
    </location>
</feature>
<feature type="active site" description="Proton donor/acceptor" evidence="1">
    <location>
        <position position="514"/>
    </location>
</feature>
<feature type="binding site" evidence="1">
    <location>
        <position position="168"/>
    </location>
    <ligand>
        <name>substrate</name>
    </ligand>
</feature>
<feature type="binding site" evidence="1">
    <location>
        <begin position="175"/>
        <end position="176"/>
    </location>
    <ligand>
        <name>substrate</name>
    </ligand>
</feature>
<feature type="binding site" evidence="1">
    <location>
        <position position="212"/>
    </location>
    <ligand>
        <name>substrate</name>
    </ligand>
</feature>
<feature type="binding site" evidence="1">
    <location>
        <begin position="221"/>
        <end position="223"/>
    </location>
    <ligand>
        <name>substrate</name>
    </ligand>
</feature>
<feature type="binding site" evidence="1">
    <location>
        <begin position="286"/>
        <end position="288"/>
    </location>
    <ligand>
        <name>substrate</name>
    </ligand>
</feature>
<feature type="binding site" evidence="1">
    <location>
        <position position="319"/>
    </location>
    <ligand>
        <name>substrate</name>
    </ligand>
</feature>
<feature type="binding site" evidence="1">
    <location>
        <position position="529"/>
    </location>
    <ligand>
        <name>substrate</name>
    </ligand>
</feature>
<feature type="lipid moiety-binding region" description="GPI-anchor amidated serine" evidence="3">
    <location>
        <position position="556"/>
    </location>
</feature>
<feature type="glycosylation site" description="N-linked (GlcNAc...) asparagine" evidence="4">
    <location>
        <position position="78"/>
    </location>
</feature>
<feature type="glycosylation site" description="N-linked (GlcNAc...) asparagine" evidence="4">
    <location>
        <position position="239"/>
    </location>
</feature>
<feature type="glycosylation site" description="N-linked (GlcNAc...) asparagine" evidence="4">
    <location>
        <position position="261"/>
    </location>
</feature>
<feature type="glycosylation site" description="N-linked (GlcNAc...) asparagine" evidence="4">
    <location>
        <position position="369"/>
    </location>
</feature>
<feature type="splice variant" id="VSP_035440" description="In isoform 2." evidence="8">
    <original>WDSYWVMEGLLLSEMAETVKGMLQNFLDLVKT</original>
    <variation>C</variation>
    <location>
        <begin position="175"/>
        <end position="206"/>
    </location>
</feature>
<feature type="sequence variant" id="VAR_049205" description="In dbSNP:rs2276065.">
    <original>T</original>
    <variation>A</variation>
    <location>
        <position position="389"/>
    </location>
</feature>
<feature type="sequence variant" id="VAR_049206" description="In dbSNP:rs11827611.">
    <original>Y</original>
    <variation>H</variation>
    <location>
        <position position="449"/>
    </location>
</feature>
<feature type="sequence variant" id="VAR_049207" description="In dbSNP:rs2276064.">
    <original>R</original>
    <variation>W</variation>
    <location>
        <position position="486"/>
    </location>
</feature>
<feature type="sequence variant" id="VAR_049208" description="In dbSNP:rs6589671.">
    <original>A</original>
    <variation>P</variation>
    <location>
        <position position="558"/>
    </location>
</feature>
<feature type="sequence variant" id="VAR_061191" description="In dbSNP:rs6589670.">
    <original>A</original>
    <variation>P</variation>
    <location>
        <position position="561"/>
    </location>
</feature>
<feature type="sequence conflict" description="In Ref. 1; BAA24381." evidence="10" ref="1">
    <original>TN</original>
    <variation>DE</variation>
    <location>
        <begin position="539"/>
        <end position="540"/>
    </location>
</feature>
<dbReference type="EC" id="3.2.1.28" evidence="6 7"/>
<dbReference type="EMBL" id="AB000824">
    <property type="protein sequence ID" value="BAA24381.1"/>
    <property type="molecule type" value="mRNA"/>
</dbReference>
<dbReference type="EMBL" id="AK223140">
    <property type="protein sequence ID" value="BAD96860.1"/>
    <property type="molecule type" value="mRNA"/>
</dbReference>
<dbReference type="EMBL" id="AK223143">
    <property type="protein sequence ID" value="BAD96863.1"/>
    <property type="molecule type" value="mRNA"/>
</dbReference>
<dbReference type="EMBL" id="CH471065">
    <property type="protein sequence ID" value="EAW67409.1"/>
    <property type="molecule type" value="Genomic_DNA"/>
</dbReference>
<dbReference type="EMBL" id="BC109206">
    <property type="protein sequence ID" value="AAI09207.1"/>
    <property type="molecule type" value="mRNA"/>
</dbReference>
<dbReference type="CCDS" id="CCDS73401.1">
    <molecule id="O43280-2"/>
</dbReference>
<dbReference type="CCDS" id="CCDS73402.1">
    <molecule id="O43280-1"/>
</dbReference>
<dbReference type="PIR" id="JC6504">
    <property type="entry name" value="JC6504"/>
</dbReference>
<dbReference type="RefSeq" id="NP_001287994.1">
    <molecule id="O43280-2"/>
    <property type="nucleotide sequence ID" value="NM_001301065.2"/>
</dbReference>
<dbReference type="RefSeq" id="NP_009111.2">
    <molecule id="O43280-1"/>
    <property type="nucleotide sequence ID" value="NM_007180.3"/>
</dbReference>
<dbReference type="SMR" id="O43280"/>
<dbReference type="BioGRID" id="116351">
    <property type="interactions" value="6"/>
</dbReference>
<dbReference type="FunCoup" id="O43280">
    <property type="interactions" value="279"/>
</dbReference>
<dbReference type="IntAct" id="O43280">
    <property type="interactions" value="1"/>
</dbReference>
<dbReference type="STRING" id="9606.ENSP00000264029"/>
<dbReference type="BindingDB" id="O43280"/>
<dbReference type="ChEMBL" id="CHEMBL3087"/>
<dbReference type="CAZy" id="GH37">
    <property type="family name" value="Glycoside Hydrolase Family 37"/>
</dbReference>
<dbReference type="GlyCosmos" id="O43280">
    <property type="glycosylation" value="4 sites, No reported glycans"/>
</dbReference>
<dbReference type="GlyGen" id="O43280">
    <property type="glycosylation" value="4 sites, 29 N-linked glycans (1 site)"/>
</dbReference>
<dbReference type="iPTMnet" id="O43280"/>
<dbReference type="PhosphoSitePlus" id="O43280"/>
<dbReference type="BioMuta" id="TREH"/>
<dbReference type="MassIVE" id="O43280"/>
<dbReference type="PaxDb" id="9606-ENSP00000264029"/>
<dbReference type="PeptideAtlas" id="O43280"/>
<dbReference type="ProteomicsDB" id="48848">
    <molecule id="O43280-1"/>
</dbReference>
<dbReference type="ProteomicsDB" id="48849">
    <molecule id="O43280-2"/>
</dbReference>
<dbReference type="Antibodypedia" id="48758">
    <property type="antibodies" value="112 antibodies from 19 providers"/>
</dbReference>
<dbReference type="DNASU" id="11181"/>
<dbReference type="Ensembl" id="ENST00000264029.9">
    <molecule id="O43280-1"/>
    <property type="protein sequence ID" value="ENSP00000264029.5"/>
    <property type="gene ID" value="ENSG00000118094.12"/>
</dbReference>
<dbReference type="Ensembl" id="ENST00000397925.2">
    <molecule id="O43280-2"/>
    <property type="protein sequence ID" value="ENSP00000381020.2"/>
    <property type="gene ID" value="ENSG00000118094.12"/>
</dbReference>
<dbReference type="GeneID" id="11181"/>
<dbReference type="KEGG" id="hsa:11181"/>
<dbReference type="MANE-Select" id="ENST00000264029.9">
    <property type="protein sequence ID" value="ENSP00000264029.5"/>
    <property type="RefSeq nucleotide sequence ID" value="NM_007180.3"/>
    <property type="RefSeq protein sequence ID" value="NP_009111.2"/>
</dbReference>
<dbReference type="UCSC" id="uc031ygn.2">
    <molecule id="O43280-1"/>
    <property type="organism name" value="human"/>
</dbReference>
<dbReference type="AGR" id="HGNC:12266"/>
<dbReference type="CTD" id="11181"/>
<dbReference type="DisGeNET" id="11181"/>
<dbReference type="GeneCards" id="TREH"/>
<dbReference type="HGNC" id="HGNC:12266">
    <property type="gene designation" value="TREH"/>
</dbReference>
<dbReference type="HPA" id="ENSG00000118094">
    <property type="expression patterns" value="Tissue enriched (intestine)"/>
</dbReference>
<dbReference type="MalaCards" id="TREH"/>
<dbReference type="MIM" id="275360">
    <property type="type" value="gene"/>
</dbReference>
<dbReference type="MIM" id="612119">
    <property type="type" value="phenotype"/>
</dbReference>
<dbReference type="neXtProt" id="NX_O43280"/>
<dbReference type="OpenTargets" id="ENSG00000118094"/>
<dbReference type="Orphanet" id="103909">
    <property type="disease" value="Trehalase deficiency"/>
</dbReference>
<dbReference type="PharmGKB" id="PA36946"/>
<dbReference type="VEuPathDB" id="HostDB:ENSG00000118094"/>
<dbReference type="eggNOG" id="KOG0602">
    <property type="taxonomic scope" value="Eukaryota"/>
</dbReference>
<dbReference type="GeneTree" id="ENSGT00390000006949"/>
<dbReference type="HOGENOM" id="CLU_006451_4_3_1"/>
<dbReference type="InParanoid" id="O43280"/>
<dbReference type="OMA" id="RYWDASD"/>
<dbReference type="OrthoDB" id="3542292at2759"/>
<dbReference type="PAN-GO" id="O43280">
    <property type="GO annotations" value="2 GO annotations based on evolutionary models"/>
</dbReference>
<dbReference type="PhylomeDB" id="O43280"/>
<dbReference type="TreeFam" id="TF314239"/>
<dbReference type="BRENDA" id="3.2.1.28">
    <property type="organism ID" value="2681"/>
</dbReference>
<dbReference type="PathwayCommons" id="O43280"/>
<dbReference type="Reactome" id="R-HSA-189085">
    <property type="pathway name" value="Digestion of dietary carbohydrate"/>
</dbReference>
<dbReference type="SignaLink" id="O43280"/>
<dbReference type="BioGRID-ORCS" id="11181">
    <property type="hits" value="9 hits in 378 CRISPR screens"/>
</dbReference>
<dbReference type="GenomeRNAi" id="11181"/>
<dbReference type="Pharos" id="O43280">
    <property type="development level" value="Tchem"/>
</dbReference>
<dbReference type="PRO" id="PR:O43280"/>
<dbReference type="Proteomes" id="UP000005640">
    <property type="component" value="Chromosome 11"/>
</dbReference>
<dbReference type="RNAct" id="O43280">
    <property type="molecule type" value="protein"/>
</dbReference>
<dbReference type="Bgee" id="ENSG00000118094">
    <property type="expression patterns" value="Expressed in jejunal mucosa and 96 other cell types or tissues"/>
</dbReference>
<dbReference type="ExpressionAtlas" id="O43280">
    <property type="expression patterns" value="baseline and differential"/>
</dbReference>
<dbReference type="GO" id="GO:0070062">
    <property type="term" value="C:extracellular exosome"/>
    <property type="evidence" value="ECO:0007005"/>
    <property type="project" value="UniProtKB"/>
</dbReference>
<dbReference type="GO" id="GO:0016020">
    <property type="term" value="C:membrane"/>
    <property type="evidence" value="ECO:0000250"/>
    <property type="project" value="UniProtKB"/>
</dbReference>
<dbReference type="GO" id="GO:0005886">
    <property type="term" value="C:plasma membrane"/>
    <property type="evidence" value="ECO:0000304"/>
    <property type="project" value="UniProtKB"/>
</dbReference>
<dbReference type="GO" id="GO:0098552">
    <property type="term" value="C:side of membrane"/>
    <property type="evidence" value="ECO:0007669"/>
    <property type="project" value="UniProtKB-KW"/>
</dbReference>
<dbReference type="GO" id="GO:0004555">
    <property type="term" value="F:alpha,alpha-trehalase activity"/>
    <property type="evidence" value="ECO:0000314"/>
    <property type="project" value="UniProtKB"/>
</dbReference>
<dbReference type="GO" id="GO:0009887">
    <property type="term" value="P:animal organ morphogenesis"/>
    <property type="evidence" value="ECO:0007669"/>
    <property type="project" value="Ensembl"/>
</dbReference>
<dbReference type="GO" id="GO:0005993">
    <property type="term" value="P:trehalose catabolic process"/>
    <property type="evidence" value="ECO:0000314"/>
    <property type="project" value="UniProtKB"/>
</dbReference>
<dbReference type="GO" id="GO:0005991">
    <property type="term" value="P:trehalose metabolic process"/>
    <property type="evidence" value="ECO:0000303"/>
    <property type="project" value="UniProtKB"/>
</dbReference>
<dbReference type="FunFam" id="1.50.10.10:FF:000034">
    <property type="entry name" value="Trehalase"/>
    <property type="match status" value="1"/>
</dbReference>
<dbReference type="Gene3D" id="1.50.10.10">
    <property type="match status" value="1"/>
</dbReference>
<dbReference type="InterPro" id="IPR008928">
    <property type="entry name" value="6-hairpin_glycosidase_sf"/>
</dbReference>
<dbReference type="InterPro" id="IPR012341">
    <property type="entry name" value="6hp_glycosidase-like_sf"/>
</dbReference>
<dbReference type="InterPro" id="IPR001661">
    <property type="entry name" value="Glyco_hydro_37"/>
</dbReference>
<dbReference type="InterPro" id="IPR018232">
    <property type="entry name" value="Glyco_hydro_37_CS"/>
</dbReference>
<dbReference type="PANTHER" id="PTHR23403">
    <property type="entry name" value="TREHALASE"/>
    <property type="match status" value="1"/>
</dbReference>
<dbReference type="PANTHER" id="PTHR23403:SF1">
    <property type="entry name" value="TREHALASE"/>
    <property type="match status" value="1"/>
</dbReference>
<dbReference type="Pfam" id="PF01204">
    <property type="entry name" value="Trehalase"/>
    <property type="match status" value="1"/>
</dbReference>
<dbReference type="PRINTS" id="PR00744">
    <property type="entry name" value="GLHYDRLASE37"/>
</dbReference>
<dbReference type="SUPFAM" id="SSF48208">
    <property type="entry name" value="Six-hairpin glycosidases"/>
    <property type="match status" value="1"/>
</dbReference>
<dbReference type="PROSITE" id="PS00927">
    <property type="entry name" value="TREHALASE_1"/>
    <property type="match status" value="1"/>
</dbReference>
<dbReference type="PROSITE" id="PS00928">
    <property type="entry name" value="TREHALASE_2"/>
    <property type="match status" value="1"/>
</dbReference>
<organism>
    <name type="scientific">Homo sapiens</name>
    <name type="common">Human</name>
    <dbReference type="NCBI Taxonomy" id="9606"/>
    <lineage>
        <taxon>Eukaryota</taxon>
        <taxon>Metazoa</taxon>
        <taxon>Chordata</taxon>
        <taxon>Craniata</taxon>
        <taxon>Vertebrata</taxon>
        <taxon>Euteleostomi</taxon>
        <taxon>Mammalia</taxon>
        <taxon>Eutheria</taxon>
        <taxon>Euarchontoglires</taxon>
        <taxon>Primates</taxon>
        <taxon>Haplorrhini</taxon>
        <taxon>Catarrhini</taxon>
        <taxon>Hominidae</taxon>
        <taxon>Homo</taxon>
    </lineage>
</organism>
<gene>
    <name evidence="11" type="primary">TREH</name>
    <name type="synonym">TREA</name>
</gene>
<evidence type="ECO:0000250" key="1">
    <source>
        <dbReference type="UniProtKB" id="P13482"/>
    </source>
</evidence>
<evidence type="ECO:0000250" key="2">
    <source>
        <dbReference type="UniProtKB" id="P19813"/>
    </source>
</evidence>
<evidence type="ECO:0000255" key="3"/>
<evidence type="ECO:0000255" key="4">
    <source>
        <dbReference type="PROSITE-ProRule" id="PRU00498"/>
    </source>
</evidence>
<evidence type="ECO:0000269" key="5">
    <source>
    </source>
</evidence>
<evidence type="ECO:0000269" key="6">
    <source>
    </source>
</evidence>
<evidence type="ECO:0000269" key="7">
    <source>
    </source>
</evidence>
<evidence type="ECO:0000303" key="8">
    <source>
    </source>
</evidence>
<evidence type="ECO:0000303" key="9">
    <source>
    </source>
</evidence>
<evidence type="ECO:0000305" key="10"/>
<evidence type="ECO:0000312" key="11">
    <source>
        <dbReference type="HGNC" id="HGNC:12266"/>
    </source>
</evidence>
<name>TREA_HUMAN</name>
<protein>
    <recommendedName>
        <fullName evidence="9">Trehalase</fullName>
        <ecNumber evidence="6 7">3.2.1.28</ecNumber>
    </recommendedName>
    <alternativeName>
        <fullName>Alpha,alpha-trehalase</fullName>
    </alternativeName>
    <alternativeName>
        <fullName>Alpha,alpha-trehalose glucohydrolase</fullName>
    </alternativeName>
</protein>
<accession>O43280</accession>
<accession>Q32MB9</accession>
<accession>Q53FY8</accession>
<comment type="function">
    <text evidence="6 7">Intestinal trehalase is probably involved in the hydrolysis of ingested trehalose.</text>
</comment>
<comment type="catalytic activity">
    <reaction evidence="6 7">
        <text>alpha,alpha-trehalose + H2O = alpha-D-glucose + beta-D-glucose</text>
        <dbReference type="Rhea" id="RHEA:32675"/>
        <dbReference type="ChEBI" id="CHEBI:15377"/>
        <dbReference type="ChEBI" id="CHEBI:15903"/>
        <dbReference type="ChEBI" id="CHEBI:16551"/>
        <dbReference type="ChEBI" id="CHEBI:17925"/>
        <dbReference type="EC" id="3.2.1.28"/>
    </reaction>
</comment>
<comment type="subunit">
    <text evidence="2">Homodimer; disulfide-linked.</text>
</comment>
<comment type="subcellular location">
    <subcellularLocation>
        <location evidence="2">Cell membrane</location>
        <topology evidence="2">Lipid-anchor</topology>
        <topology evidence="2">GPI-anchor</topology>
    </subcellularLocation>
</comment>
<comment type="alternative products">
    <event type="alternative splicing"/>
    <isoform>
        <id>O43280-1</id>
        <name>1</name>
        <sequence type="displayed"/>
    </isoform>
    <isoform>
        <id>O43280-2</id>
        <name>2</name>
        <sequence type="described" ref="VSP_035440"/>
    </isoform>
</comment>
<comment type="tissue specificity">
    <text evidence="7">Expressed in kidney, liver and small intestine. Also more weakly expressed in pancreas.</text>
</comment>
<comment type="disease" evidence="5">
    <disease id="DI-05182">
        <name>Trehalase deficiency</name>
        <acronym>TREHD</acronym>
        <description>An autosomal recessive condition characterized by the inability to digest trehalose, a disaccharide found in mushrooms, products containing baker's yeast, and dried food. Individuals with trehalase deficiency suffer from abdominal pain, increased rectal flatulence, and diarrhea due to osmotic water flow into the colon.</description>
        <dbReference type="MIM" id="612119"/>
    </disease>
    <text>The gene represented in this entry is involved in disease pathogenesis.</text>
</comment>
<comment type="similarity">
    <text evidence="10">Belongs to the glycosyl hydrolase 37 family.</text>
</comment>
<comment type="online information" name="Wikipedia">
    <link uri="https://en.wikipedia.org/wiki/Trehalase"/>
    <text>Trehalase entry</text>
</comment>
<reference key="1">
    <citation type="journal article" date="1997" name="Gene">
        <title>Molecular cloning, sequencing and expression of cDNA encoding human trehalase.</title>
        <authorList>
            <person name="Ishihara R."/>
            <person name="Taketani S."/>
            <person name="Sasai-Takedatsu M."/>
            <person name="Kino M."/>
            <person name="Tokunaga R."/>
            <person name="Kobayashi Y."/>
        </authorList>
    </citation>
    <scope>NUCLEOTIDE SEQUENCE [MRNA] (ISOFORM 1)</scope>
    <scope>FUNCTION</scope>
    <scope>CATALYTIC ACTIVITY</scope>
    <scope>TISSUE SPECIFICITY</scope>
    <source>
        <tissue>Kidney</tissue>
    </source>
</reference>
<reference key="2">
    <citation type="submission" date="2005-04" db="EMBL/GenBank/DDBJ databases">
        <authorList>
            <person name="Suzuki Y."/>
            <person name="Sugano S."/>
            <person name="Totoki Y."/>
            <person name="Toyoda A."/>
            <person name="Takeda T."/>
            <person name="Sakaki Y."/>
            <person name="Tanaka A."/>
            <person name="Yokoyama S."/>
        </authorList>
    </citation>
    <scope>NUCLEOTIDE SEQUENCE [LARGE SCALE MRNA] (ISOFORM 1)</scope>
    <source>
        <tissue>Kidney</tissue>
    </source>
</reference>
<reference key="3">
    <citation type="submission" date="2005-07" db="EMBL/GenBank/DDBJ databases">
        <authorList>
            <person name="Mural R.J."/>
            <person name="Istrail S."/>
            <person name="Sutton G.G."/>
            <person name="Florea L."/>
            <person name="Halpern A.L."/>
            <person name="Mobarry C.M."/>
            <person name="Lippert R."/>
            <person name="Walenz B."/>
            <person name="Shatkay H."/>
            <person name="Dew I."/>
            <person name="Miller J.R."/>
            <person name="Flanigan M.J."/>
            <person name="Edwards N.J."/>
            <person name="Bolanos R."/>
            <person name="Fasulo D."/>
            <person name="Halldorsson B.V."/>
            <person name="Hannenhalli S."/>
            <person name="Turner R."/>
            <person name="Yooseph S."/>
            <person name="Lu F."/>
            <person name="Nusskern D.R."/>
            <person name="Shue B.C."/>
            <person name="Zheng X.H."/>
            <person name="Zhong F."/>
            <person name="Delcher A.L."/>
            <person name="Huson D.H."/>
            <person name="Kravitz S.A."/>
            <person name="Mouchard L."/>
            <person name="Reinert K."/>
            <person name="Remington K.A."/>
            <person name="Clark A.G."/>
            <person name="Waterman M.S."/>
            <person name="Eichler E.E."/>
            <person name="Adams M.D."/>
            <person name="Hunkapiller M.W."/>
            <person name="Myers E.W."/>
            <person name="Venter J.C."/>
        </authorList>
    </citation>
    <scope>NUCLEOTIDE SEQUENCE [LARGE SCALE GENOMIC DNA]</scope>
</reference>
<reference key="4">
    <citation type="journal article" date="2004" name="Genome Res.">
        <title>The status, quality, and expansion of the NIH full-length cDNA project: the Mammalian Gene Collection (MGC).</title>
        <authorList>
            <consortium name="The MGC Project Team"/>
        </authorList>
    </citation>
    <scope>NUCLEOTIDE SEQUENCE [LARGE SCALE MRNA] (ISOFORM 2)</scope>
</reference>
<reference key="5">
    <citation type="journal article" date="1996" name="Nephron">
        <title>Human trehalase: characterization, localization, and its increase in urine by renal proximal tubular damage.</title>
        <authorList>
            <person name="Sasai-Takedatsu M."/>
            <person name="Taketani S."/>
            <person name="Nagata N."/>
            <person name="Furukawa T."/>
            <person name="Tokunaga R."/>
            <person name="Kojima T."/>
            <person name="Kobayashi Y."/>
        </authorList>
    </citation>
    <scope>PARTIAL PROTEIN SEQUENCE</scope>
    <scope>FUNCTION</scope>
    <scope>CATALYTIC ACTIVITY</scope>
</reference>
<reference key="6">
    <citation type="journal article" date="2017" name="Nature">
        <title>Human knockouts and phenotypic analysis in a cohort with a high rate of consanguinity.</title>
        <authorList>
            <person name="Saleheen D."/>
            <person name="Natarajan P."/>
            <person name="Armean I.M."/>
            <person name="Zhao W."/>
            <person name="Rasheed A."/>
            <person name="Khetarpal S.A."/>
            <person name="Won H.H."/>
            <person name="Karczewski K.J."/>
            <person name="O'Donnell-Luria A.H."/>
            <person name="Samocha K.E."/>
            <person name="Weisburd B."/>
            <person name="Gupta N."/>
            <person name="Zaidi M."/>
            <person name="Samuel M."/>
            <person name="Imran A."/>
            <person name="Abbas S."/>
            <person name="Majeed F."/>
            <person name="Ishaq M."/>
            <person name="Akhtar S."/>
            <person name="Trindade K."/>
            <person name="Mucksavage M."/>
            <person name="Qamar N."/>
            <person name="Zaman K.S."/>
            <person name="Yaqoob Z."/>
            <person name="Saghir T."/>
            <person name="Rizvi S.N.H."/>
            <person name="Memon A."/>
            <person name="Hayyat Mallick N."/>
            <person name="Ishaq M."/>
            <person name="Rasheed S.Z."/>
            <person name="Memon F.U."/>
            <person name="Mahmood K."/>
            <person name="Ahmed N."/>
            <person name="Do R."/>
            <person name="Krauss R.M."/>
            <person name="MacArthur D.G."/>
            <person name="Gabriel S."/>
            <person name="Lander E.S."/>
            <person name="Daly M.J."/>
            <person name="Frossard P."/>
            <person name="Danesh J."/>
            <person name="Rader D.J."/>
            <person name="Kathiresan S."/>
        </authorList>
    </citation>
    <scope>INVOLVEMENT IN TREHD</scope>
</reference>
<proteinExistence type="evidence at protein level"/>
<sequence>MPGRTWELCLLLLLGLGLGSQEALPPPCESEIYCHGELLNQVQMAKLYQDDKQFVDMPLSIAPEQVLQTFTELSRDHNHSIPREQLQAFVHEHFQAKGQELQPWTPADWKDSPQFLQKISDAKLRAWAGQLHQLWKKLGKKMKPEVLSHPERFSLIYSEHPFIVPGGRFVEFYYWDSYWVMEGLLLSEMAETVKGMLQNFLDLVKTYGHVPNGGRVYYLQRSQPPLLTLMMDCYLTHTNDTAFLQENIETLALELDFWTKNRTVSVSLEGKNYLLNRYYVPYGGPRPESYSKDVELADTLPEGDREALWAELKAGAESGWDFSSRWLIGGPNPNSLSGIRTSKLVPVDLNAFLCQAEELMSNFYSRLGNDSQATKYRILRSQRLAALNTVLWDEQTGAWFDYDLEKKKKNREFYPSNLTPLWAGCFSDPGVADKALKYLEDNRILTYQYGIPTSLQKTGQQWDFPNAWAPLQDLVIRGLAKAPLRRAQEVAFQLAQNWIRTNFDVYSQKSAMYEKYDVSNGGQPGGGGEYEVQEGFGWTNGVVLMLLDRYGDRLTSGAKLAFLEPHCLAATLLPSLLLSLLPW</sequence>